<evidence type="ECO:0000250" key="1"/>
<evidence type="ECO:0000256" key="2">
    <source>
        <dbReference type="SAM" id="MobiDB-lite"/>
    </source>
</evidence>
<evidence type="ECO:0000269" key="3">
    <source>
    </source>
</evidence>
<evidence type="ECO:0000305" key="4"/>
<reference key="1">
    <citation type="journal article" date="1998" name="J. Med. Dent. Sci.">
        <title>Molecular cloning of the chick Nau gene and analysis of its expression patterns during neurogenesis.</title>
        <authorList>
            <person name="Suzuki M."/>
            <person name="Takagi M."/>
            <person name="Takeda S."/>
            <person name="Katsube K."/>
        </authorList>
    </citation>
    <scope>NUCLEOTIDE SEQUENCE [MRNA]</scope>
    <scope>DEVELOPMENTAL STAGE</scope>
</reference>
<accession>O73737</accession>
<sequence length="369" mass="40820">MAWPCITRACCIARFWNQLDKADIAVPLVFTKYSEATEQPLPAQIPRSAAAPIDTQPGGDARAAGGGDAAPGPARPGTAPHGSPPADSVMRHDYKPWKVQRPEPSCKPKSEYQPSDTPFEKETQYQKDFRAWPIPKRGDHPWIPKAGPSPVLGPERGSPEKAAQEKRRKKEEEAEADEEHPKAARPGDAREKGRQRGDEAGGQEGRGRAAADALNRQIKEEVVAAGVSSSYRNEFRPWIDVKPVKAIKAKAQYKPPEEKMTHETSYSAQFKGETSKPAPADNKFLERRRIRTLYSEPYKEPPKVEKPSVKPSKPKKTTTSHKPLKKAKDKQIASGRAAKKKSAETSNTAKPEDKEKSKEMNNKLAEAKE</sequence>
<name>MAP6_CHICK</name>
<feature type="chain" id="PRO_0000344047" description="Microtubule-associated protein 6 homolog">
    <location>
        <begin position="1"/>
        <end position="369"/>
    </location>
</feature>
<feature type="region of interest" description="Disordered" evidence="2">
    <location>
        <begin position="41"/>
        <end position="213"/>
    </location>
</feature>
<feature type="region of interest" description="Mn 1">
    <location>
        <begin position="87"/>
        <end position="110"/>
    </location>
</feature>
<feature type="region of interest" description="Mn 2">
    <location>
        <begin position="122"/>
        <end position="145"/>
    </location>
</feature>
<feature type="region of interest" description="Mn 3">
    <location>
        <begin position="228"/>
        <end position="251"/>
    </location>
</feature>
<feature type="region of interest" description="Disordered" evidence="2">
    <location>
        <begin position="251"/>
        <end position="369"/>
    </location>
</feature>
<feature type="compositionally biased region" description="Low complexity" evidence="2">
    <location>
        <begin position="70"/>
        <end position="80"/>
    </location>
</feature>
<feature type="compositionally biased region" description="Basic and acidic residues" evidence="2">
    <location>
        <begin position="89"/>
        <end position="110"/>
    </location>
</feature>
<feature type="compositionally biased region" description="Basic and acidic residues" evidence="2">
    <location>
        <begin position="118"/>
        <end position="142"/>
    </location>
</feature>
<feature type="compositionally biased region" description="Basic and acidic residues" evidence="2">
    <location>
        <begin position="179"/>
        <end position="209"/>
    </location>
</feature>
<feature type="compositionally biased region" description="Basic and acidic residues" evidence="2">
    <location>
        <begin position="297"/>
        <end position="308"/>
    </location>
</feature>
<feature type="compositionally biased region" description="Basic residues" evidence="2">
    <location>
        <begin position="312"/>
        <end position="328"/>
    </location>
</feature>
<feature type="compositionally biased region" description="Basic and acidic residues" evidence="2">
    <location>
        <begin position="350"/>
        <end position="369"/>
    </location>
</feature>
<dbReference type="EMBL" id="AF038560">
    <property type="protein sequence ID" value="AAC79958.1"/>
    <property type="molecule type" value="mRNA"/>
</dbReference>
<dbReference type="RefSeq" id="NP_990250.1">
    <property type="nucleotide sequence ID" value="NM_204919.1"/>
</dbReference>
<dbReference type="FunCoup" id="O73737">
    <property type="interactions" value="139"/>
</dbReference>
<dbReference type="STRING" id="9031.ENSGALP00000012027"/>
<dbReference type="PaxDb" id="9031-ENSGALP00000012027"/>
<dbReference type="GeneID" id="395753"/>
<dbReference type="KEGG" id="gga:395753"/>
<dbReference type="CTD" id="4135"/>
<dbReference type="VEuPathDB" id="HostDB:geneid_395753"/>
<dbReference type="eggNOG" id="ENOG502QS1F">
    <property type="taxonomic scope" value="Eukaryota"/>
</dbReference>
<dbReference type="InParanoid" id="O73737"/>
<dbReference type="OrthoDB" id="9632339at2759"/>
<dbReference type="PhylomeDB" id="O73737"/>
<dbReference type="PRO" id="PR:O73737"/>
<dbReference type="Proteomes" id="UP000000539">
    <property type="component" value="Unassembled WGS sequence"/>
</dbReference>
<dbReference type="GO" id="GO:0030424">
    <property type="term" value="C:axon"/>
    <property type="evidence" value="ECO:0000318"/>
    <property type="project" value="GO_Central"/>
</dbReference>
<dbReference type="GO" id="GO:0005801">
    <property type="term" value="C:cis-Golgi network"/>
    <property type="evidence" value="ECO:0000318"/>
    <property type="project" value="GO_Central"/>
</dbReference>
<dbReference type="GO" id="GO:0030425">
    <property type="term" value="C:dendrite"/>
    <property type="evidence" value="ECO:0000318"/>
    <property type="project" value="GO_Central"/>
</dbReference>
<dbReference type="GO" id="GO:0005798">
    <property type="term" value="C:Golgi-associated vesicle"/>
    <property type="evidence" value="ECO:0000318"/>
    <property type="project" value="GO_Central"/>
</dbReference>
<dbReference type="GO" id="GO:0005874">
    <property type="term" value="C:microtubule"/>
    <property type="evidence" value="ECO:0000318"/>
    <property type="project" value="GO_Central"/>
</dbReference>
<dbReference type="GO" id="GO:0005516">
    <property type="term" value="F:calmodulin binding"/>
    <property type="evidence" value="ECO:0007669"/>
    <property type="project" value="InterPro"/>
</dbReference>
<dbReference type="GO" id="GO:0008017">
    <property type="term" value="F:microtubule binding"/>
    <property type="evidence" value="ECO:0000318"/>
    <property type="project" value="GO_Central"/>
</dbReference>
<dbReference type="GO" id="GO:0030705">
    <property type="term" value="P:cytoskeleton-dependent intracellular transport"/>
    <property type="evidence" value="ECO:0000318"/>
    <property type="project" value="GO_Central"/>
</dbReference>
<dbReference type="GO" id="GO:0048813">
    <property type="term" value="P:dendrite morphogenesis"/>
    <property type="evidence" value="ECO:0000250"/>
    <property type="project" value="UniProtKB"/>
</dbReference>
<dbReference type="GO" id="GO:0032418">
    <property type="term" value="P:lysosome localization"/>
    <property type="evidence" value="ECO:0000250"/>
    <property type="project" value="UniProtKB"/>
</dbReference>
<dbReference type="GO" id="GO:0000226">
    <property type="term" value="P:microtubule cytoskeleton organization"/>
    <property type="evidence" value="ECO:0007669"/>
    <property type="project" value="InterPro"/>
</dbReference>
<dbReference type="GO" id="GO:0050772">
    <property type="term" value="P:positive regulation of axonogenesis"/>
    <property type="evidence" value="ECO:0000318"/>
    <property type="project" value="GO_Central"/>
</dbReference>
<dbReference type="GO" id="GO:0070507">
    <property type="term" value="P:regulation of microtubule cytoskeleton organization"/>
    <property type="evidence" value="ECO:0000318"/>
    <property type="project" value="GO_Central"/>
</dbReference>
<dbReference type="InterPro" id="IPR007882">
    <property type="entry name" value="MAP6"/>
</dbReference>
<dbReference type="PANTHER" id="PTHR14759:SF29">
    <property type="entry name" value="MICROTUBULE-ASSOCIATED PROTEIN 6"/>
    <property type="match status" value="1"/>
</dbReference>
<dbReference type="PANTHER" id="PTHR14759">
    <property type="entry name" value="STOP PROTEIN"/>
    <property type="match status" value="1"/>
</dbReference>
<proteinExistence type="evidence at transcript level"/>
<protein>
    <recommendedName>
        <fullName>Microtubule-associated protein 6 homolog</fullName>
        <shortName>MAP-6 homolog</shortName>
    </recommendedName>
    <alternativeName>
        <fullName>Stable tubule-only polypeptide homolog</fullName>
        <shortName>STOP</shortName>
    </alternativeName>
</protein>
<comment type="function">
    <text evidence="1">Involved in microtubule stabilization in many cell types, including neuronal cells. Specifically has microtubule cold stabilizing activity. Involved in dendrite morphogenesis and maintenance by regulating lysosomal trafficking (By similarity).</text>
</comment>
<comment type="subcellular location">
    <subcellularLocation>
        <location evidence="1">Cytoplasm</location>
        <location evidence="1">Cytoskeleton</location>
    </subcellularLocation>
</comment>
<comment type="developmental stage">
    <text evidence="3">In the embryo is expressed in the developing hindbrain and is accumulated in rhombomere boundary regions and in the rhombomere 2, 4 and 6.</text>
</comment>
<comment type="similarity">
    <text evidence="4">Belongs to the STOP family.</text>
</comment>
<gene>
    <name type="primary">MAP6</name>
    <name type="synonym">Nau</name>
</gene>
<organism>
    <name type="scientific">Gallus gallus</name>
    <name type="common">Chicken</name>
    <dbReference type="NCBI Taxonomy" id="9031"/>
    <lineage>
        <taxon>Eukaryota</taxon>
        <taxon>Metazoa</taxon>
        <taxon>Chordata</taxon>
        <taxon>Craniata</taxon>
        <taxon>Vertebrata</taxon>
        <taxon>Euteleostomi</taxon>
        <taxon>Archelosauria</taxon>
        <taxon>Archosauria</taxon>
        <taxon>Dinosauria</taxon>
        <taxon>Saurischia</taxon>
        <taxon>Theropoda</taxon>
        <taxon>Coelurosauria</taxon>
        <taxon>Aves</taxon>
        <taxon>Neognathae</taxon>
        <taxon>Galloanserae</taxon>
        <taxon>Galliformes</taxon>
        <taxon>Phasianidae</taxon>
        <taxon>Phasianinae</taxon>
        <taxon>Gallus</taxon>
    </lineage>
</organism>
<keyword id="KW-0963">Cytoplasm</keyword>
<keyword id="KW-0206">Cytoskeleton</keyword>
<keyword id="KW-0493">Microtubule</keyword>
<keyword id="KW-1185">Reference proteome</keyword>
<keyword id="KW-0813">Transport</keyword>